<evidence type="ECO:0000250" key="1"/>
<evidence type="ECO:0000250" key="2">
    <source>
        <dbReference type="UniProtKB" id="O80852"/>
    </source>
</evidence>
<evidence type="ECO:0000255" key="3"/>
<evidence type="ECO:0000269" key="4">
    <source>
    </source>
</evidence>
<evidence type="ECO:0000269" key="5">
    <source>
    </source>
</evidence>
<evidence type="ECO:0000303" key="6">
    <source>
    </source>
</evidence>
<evidence type="ECO:0000303" key="7">
    <source>
    </source>
</evidence>
<evidence type="ECO:0000305" key="8"/>
<proteinExistence type="evidence at protein level"/>
<comment type="function">
    <text evidence="4 5">Conjugation of reduced glutathione to a wide number of exogenous and endogenous hydrophobic electrophiles (PubMed:3277162, PubMed:3532034). Involved in the detoxification of certain herbicides (PubMed:3532034).</text>
</comment>
<comment type="catalytic activity">
    <reaction evidence="4 5">
        <text>RX + glutathione = an S-substituted glutathione + a halide anion + H(+)</text>
        <dbReference type="Rhea" id="RHEA:16437"/>
        <dbReference type="ChEBI" id="CHEBI:15378"/>
        <dbReference type="ChEBI" id="CHEBI:16042"/>
        <dbReference type="ChEBI" id="CHEBI:17792"/>
        <dbReference type="ChEBI" id="CHEBI:57925"/>
        <dbReference type="ChEBI" id="CHEBI:90779"/>
        <dbReference type="EC" id="2.5.1.18"/>
    </reaction>
</comment>
<comment type="subunit">
    <text evidence="5">Homodimer.</text>
</comment>
<comment type="similarity">
    <text evidence="8">Belongs to the GST superfamily. Phi family.</text>
</comment>
<name>GSTF3_MAIZE</name>
<reference key="1">
    <citation type="journal article" date="1988" name="Nucleic Acids Res.">
        <title>Characterization and heterospecific expression of cDNA clones of genes in the maize GSH S-transferase multigene family.</title>
        <authorList>
            <person name="Grove G."/>
            <person name="Zarlengo R.P."/>
            <person name="Timmerman K.P."/>
            <person name="Li N.-Q."/>
            <person name="Tam M.F."/>
            <person name="Tu C.-P.D."/>
        </authorList>
    </citation>
    <scope>NUCLEOTIDE SEQUENCE [MRNA]</scope>
    <scope>FUNCTION</scope>
    <scope>CATALYTIC ACTIVITY</scope>
</reference>
<reference key="2">
    <citation type="journal article" date="1986" name="Nucleic Acids Res.">
        <title>Cloning and expression of a cDNA encoding a maize glutathione-S-transferase in E. coli.</title>
        <authorList>
            <person name="Moore R.E."/>
            <person name="Davies M.S."/>
            <person name="O'Connell K.M."/>
            <person name="Harding E.I."/>
            <person name="Wiegand R.C."/>
            <person name="Tiemeier D.C."/>
        </authorList>
    </citation>
    <scope>NUCLEOTIDE SEQUENCE [MRNA]</scope>
    <scope>FUNCTION</scope>
    <scope>CATALYTIC ACTIVITY</scope>
    <scope>SUBUNIT</scope>
</reference>
<reference key="3">
    <citation type="journal article" date="1996" name="Theor. Appl. Genet.">
        <title>The maize two dimensional gel protein database: towards an integrated genome analysis program.</title>
        <authorList>
            <person name="Touzet P."/>
            <person name="Riccardi F."/>
            <person name="Morin C."/>
            <person name="Damerval C."/>
            <person name="Huet J.-C."/>
            <person name="Pernollet J.-C."/>
            <person name="Zivy M."/>
            <person name="de Vienne D."/>
        </authorList>
        <dbReference type="AGRICOLA" id="IND20551642"/>
    </citation>
    <scope>PROTEIN SEQUENCE OF 143-153</scope>
    <source>
        <tissue>Coleoptile</tissue>
    </source>
</reference>
<organism>
    <name type="scientific">Zea mays</name>
    <name type="common">Maize</name>
    <dbReference type="NCBI Taxonomy" id="4577"/>
    <lineage>
        <taxon>Eukaryota</taxon>
        <taxon>Viridiplantae</taxon>
        <taxon>Streptophyta</taxon>
        <taxon>Embryophyta</taxon>
        <taxon>Tracheophyta</taxon>
        <taxon>Spermatophyta</taxon>
        <taxon>Magnoliopsida</taxon>
        <taxon>Liliopsida</taxon>
        <taxon>Poales</taxon>
        <taxon>Poaceae</taxon>
        <taxon>PACMAD clade</taxon>
        <taxon>Panicoideae</taxon>
        <taxon>Andropogonodae</taxon>
        <taxon>Andropogoneae</taxon>
        <taxon>Tripsacinae</taxon>
        <taxon>Zea</taxon>
    </lineage>
</organism>
<feature type="initiator methionine" description="Removed">
    <location>
        <position position="1"/>
    </location>
</feature>
<feature type="chain" id="PRO_0000185842" description="Glutathione S-transferase 3">
    <location>
        <begin position="2"/>
        <end position="222"/>
    </location>
</feature>
<feature type="domain" description="GST N-terminal" evidence="3">
    <location>
        <begin position="2"/>
        <end position="83"/>
    </location>
</feature>
<feature type="domain" description="GST C-terminal" evidence="3">
    <location>
        <begin position="89"/>
        <end position="219"/>
    </location>
</feature>
<feature type="binding site" evidence="1">
    <location>
        <position position="12"/>
    </location>
    <ligand>
        <name>glutathione</name>
        <dbReference type="ChEBI" id="CHEBI:57925"/>
    </ligand>
</feature>
<feature type="binding site" evidence="2">
    <location>
        <begin position="13"/>
        <end position="14"/>
    </location>
    <ligand>
        <name>glutathione</name>
        <dbReference type="ChEBI" id="CHEBI:57925"/>
    </ligand>
</feature>
<feature type="binding site" evidence="2">
    <location>
        <begin position="41"/>
        <end position="42"/>
    </location>
    <ligand>
        <name>glutathione</name>
        <dbReference type="ChEBI" id="CHEBI:57925"/>
    </ligand>
</feature>
<feature type="binding site" evidence="2">
    <location>
        <begin position="54"/>
        <end position="55"/>
    </location>
    <ligand>
        <name>glutathione</name>
        <dbReference type="ChEBI" id="CHEBI:57925"/>
    </ligand>
</feature>
<feature type="binding site" evidence="2">
    <location>
        <begin position="67"/>
        <end position="68"/>
    </location>
    <ligand>
        <name>glutathione</name>
        <dbReference type="ChEBI" id="CHEBI:57925"/>
    </ligand>
</feature>
<feature type="sequence conflict" description="In Ref. 2." evidence="8" ref="2">
    <original>H</original>
    <variation>Y</variation>
    <location>
        <position position="108"/>
    </location>
</feature>
<feature type="sequence conflict" description="In Ref. 2; CAA27957/CAA28053." evidence="8" ref="2">
    <original>ASPLVFQLLVRPLLGGA</original>
    <variation>RVAAGVPAAREAAPGRR</variation>
    <location>
        <begin position="111"/>
        <end position="127"/>
    </location>
</feature>
<feature type="sequence conflict" description="In Ref. 2; CAA27957/CAA28053." evidence="8" ref="2">
    <original>E</original>
    <variation>D</variation>
    <location>
        <position position="134"/>
    </location>
</feature>
<feature type="sequence conflict" description="In Ref. 2; CAA27957." evidence="8" ref="2">
    <original>AHLARNKYLAGDEFTLADANHALLPALTSARP</original>
    <variation>RTSPATSTSPGTSSRSPTPTTRSYLLYLSKT</variation>
    <location>
        <begin position="149"/>
        <end position="180"/>
    </location>
</feature>
<feature type="sequence conflict" description="In Ref. 2; CAA27957." evidence="8" ref="2">
    <original>GCVAAR</original>
    <variation>ARRRP</variation>
    <location>
        <begin position="184"/>
        <end position="189"/>
    </location>
</feature>
<feature type="sequence conflict" description="In Ref. 2; CAA27957/CAA28053." evidence="8" ref="2">
    <original>A</original>
    <variation>V</variation>
    <location>
        <position position="200"/>
    </location>
</feature>
<sequence>MAPLKLYGMPLSPNVVRVATVLNEKGLDFEIVPVDLTTGAHKQPDFLALNPFGQIPALVDGDEVLFESRAINRYIASKYASEGTDLLPATASAAKLEVWLEVESHHFHPNASPLVFQLLVRPLLGGAPDAAVVEKHAEQLAKVLDVYEAHLARNKYLAGDEFTLADANHALLPALTSARPPRPGCVAARPHVKAWWEAIAARPAFQKTVAAIPLPPPPSSSA</sequence>
<dbReference type="EC" id="2.5.1.18" evidence="4 5"/>
<dbReference type="EMBL" id="X06755">
    <property type="protein sequence ID" value="CAA29929.1"/>
    <property type="molecule type" value="mRNA"/>
</dbReference>
<dbReference type="EMBL" id="X04375">
    <property type="protein sequence ID" value="CAA27957.1"/>
    <property type="molecule type" value="mRNA"/>
</dbReference>
<dbReference type="EMBL" id="X04455">
    <property type="protein sequence ID" value="CAA28053.1"/>
    <property type="molecule type" value="mRNA"/>
</dbReference>
<dbReference type="PIR" id="A24703">
    <property type="entry name" value="XUZM31"/>
</dbReference>
<dbReference type="PIR" id="S00717">
    <property type="entry name" value="XUZM32"/>
</dbReference>
<dbReference type="SMR" id="P04907"/>
<dbReference type="FunCoup" id="P04907">
    <property type="interactions" value="1211"/>
</dbReference>
<dbReference type="STRING" id="4577.P04907"/>
<dbReference type="PaxDb" id="4577-GRMZM2G146246_P02"/>
<dbReference type="MaizeGDB" id="65344"/>
<dbReference type="eggNOG" id="KOG0867">
    <property type="taxonomic scope" value="Eukaryota"/>
</dbReference>
<dbReference type="InParanoid" id="P04907"/>
<dbReference type="Proteomes" id="UP000007305">
    <property type="component" value="Unplaced"/>
</dbReference>
<dbReference type="ExpressionAtlas" id="P04907">
    <property type="expression patterns" value="baseline and differential"/>
</dbReference>
<dbReference type="GO" id="GO:0005737">
    <property type="term" value="C:cytoplasm"/>
    <property type="evidence" value="ECO:0000318"/>
    <property type="project" value="GO_Central"/>
</dbReference>
<dbReference type="GO" id="GO:0032991">
    <property type="term" value="C:protein-containing complex"/>
    <property type="evidence" value="ECO:0000303"/>
    <property type="project" value="AgBase"/>
</dbReference>
<dbReference type="GO" id="GO:0043295">
    <property type="term" value="F:glutathione binding"/>
    <property type="evidence" value="ECO:0000318"/>
    <property type="project" value="GO_Central"/>
</dbReference>
<dbReference type="GO" id="GO:0004364">
    <property type="term" value="F:glutathione transferase activity"/>
    <property type="evidence" value="ECO:0000314"/>
    <property type="project" value="AgBase"/>
</dbReference>
<dbReference type="GO" id="GO:0006749">
    <property type="term" value="P:glutathione metabolic process"/>
    <property type="evidence" value="ECO:0000318"/>
    <property type="project" value="GO_Central"/>
</dbReference>
<dbReference type="GO" id="GO:0009635">
    <property type="term" value="P:response to herbicide"/>
    <property type="evidence" value="ECO:0000314"/>
    <property type="project" value="AgBase"/>
</dbReference>
<dbReference type="CDD" id="cd03187">
    <property type="entry name" value="GST_C_Phi"/>
    <property type="match status" value="1"/>
</dbReference>
<dbReference type="CDD" id="cd03053">
    <property type="entry name" value="GST_N_Phi"/>
    <property type="match status" value="1"/>
</dbReference>
<dbReference type="FunFam" id="1.20.1050.10:FF:000004">
    <property type="entry name" value="Glutathione S-transferase F2"/>
    <property type="match status" value="1"/>
</dbReference>
<dbReference type="FunFam" id="3.40.30.10:FF:000016">
    <property type="entry name" value="Glutathione S-transferase F2"/>
    <property type="match status" value="1"/>
</dbReference>
<dbReference type="Gene3D" id="1.20.1050.10">
    <property type="match status" value="1"/>
</dbReference>
<dbReference type="Gene3D" id="3.40.30.10">
    <property type="entry name" value="Glutaredoxin"/>
    <property type="match status" value="1"/>
</dbReference>
<dbReference type="InterPro" id="IPR010987">
    <property type="entry name" value="Glutathione-S-Trfase_C-like"/>
</dbReference>
<dbReference type="InterPro" id="IPR036282">
    <property type="entry name" value="Glutathione-S-Trfase_C_sf"/>
</dbReference>
<dbReference type="InterPro" id="IPR004045">
    <property type="entry name" value="Glutathione_S-Trfase_N"/>
</dbReference>
<dbReference type="InterPro" id="IPR004046">
    <property type="entry name" value="GST_C"/>
</dbReference>
<dbReference type="InterPro" id="IPR034347">
    <property type="entry name" value="GST_Phi_C"/>
</dbReference>
<dbReference type="InterPro" id="IPR036249">
    <property type="entry name" value="Thioredoxin-like_sf"/>
</dbReference>
<dbReference type="PANTHER" id="PTHR43900">
    <property type="entry name" value="GLUTATHIONE S-TRANSFERASE RHO"/>
    <property type="match status" value="1"/>
</dbReference>
<dbReference type="PANTHER" id="PTHR43900:SF3">
    <property type="entry name" value="GLUTATHIONE S-TRANSFERASE RHO"/>
    <property type="match status" value="1"/>
</dbReference>
<dbReference type="Pfam" id="PF00043">
    <property type="entry name" value="GST_C"/>
    <property type="match status" value="1"/>
</dbReference>
<dbReference type="Pfam" id="PF02798">
    <property type="entry name" value="GST_N"/>
    <property type="match status" value="1"/>
</dbReference>
<dbReference type="SFLD" id="SFLDG01150">
    <property type="entry name" value="Main.1:_Beta-like"/>
    <property type="match status" value="1"/>
</dbReference>
<dbReference type="SFLD" id="SFLDG01154">
    <property type="entry name" value="Main.5:_Phi-like"/>
    <property type="match status" value="1"/>
</dbReference>
<dbReference type="SFLD" id="SFLDG00358">
    <property type="entry name" value="Main_(cytGST)"/>
    <property type="match status" value="1"/>
</dbReference>
<dbReference type="SUPFAM" id="SSF47616">
    <property type="entry name" value="GST C-terminal domain-like"/>
    <property type="match status" value="1"/>
</dbReference>
<dbReference type="SUPFAM" id="SSF52833">
    <property type="entry name" value="Thioredoxin-like"/>
    <property type="match status" value="1"/>
</dbReference>
<dbReference type="PROSITE" id="PS50405">
    <property type="entry name" value="GST_CTER"/>
    <property type="match status" value="1"/>
</dbReference>
<dbReference type="PROSITE" id="PS50404">
    <property type="entry name" value="GST_NTER"/>
    <property type="match status" value="1"/>
</dbReference>
<keyword id="KW-0903">Direct protein sequencing</keyword>
<keyword id="KW-1185">Reference proteome</keyword>
<keyword id="KW-0808">Transferase</keyword>
<gene>
    <name evidence="6 7" type="primary">GST3</name>
</gene>
<protein>
    <recommendedName>
        <fullName evidence="6 7">Glutathione S-transferase 3</fullName>
        <ecNumber evidence="4 5">2.5.1.18</ecNumber>
    </recommendedName>
    <alternativeName>
        <fullName evidence="6 7">GST class-phi member 3</fullName>
    </alternativeName>
    <alternativeName>
        <fullName evidence="6 7">GST-III</fullName>
    </alternativeName>
</protein>
<accession>P04907</accession>
<accession>P15542</accession>